<accession>A8G4E6</accession>
<sequence length="436" mass="48790">MHIVVVGVSHRTAPVEVREKLSIPDHSITESLKALKAFSEVLEVSILSTCNRLEIYALAKDKNTGISSIKEFLSEYSGIIFEDLDPHLFCFRQEEAVLHLMKVSAGLDSLVLGEGQILSQVKKMMRLGQENQSTGPILNRLLTQSVSTGKKVRSETNLGTGAVSISSAAVELAQLKIGQEKGFDTLVSLESENVLVVGAGRMSRLLITHLKSKGCHKLILVNRNIDRALNLAQDFPDLKIVCRGLNELDENISISSLVFTSTASEVPIIDLAKIEKLNLNNKLKFIDIGVPRNISNDVKQHEFVKSFDVDDLQEVVSRNQEFRQKIAKEAESLVEEERIIFLEWWASLEAVPVINKLRSDLELIRKEELQKALSRMGPDFSARERKVVEALTKGIINKILHTPVTKLRSPQSREERQVSLKIVEKLFSLAEEDKNN</sequence>
<protein>
    <recommendedName>
        <fullName evidence="1">Glutamyl-tRNA reductase</fullName>
        <shortName evidence="1">GluTR</shortName>
        <ecNumber evidence="1">1.2.1.70</ecNumber>
    </recommendedName>
</protein>
<evidence type="ECO:0000255" key="1">
    <source>
        <dbReference type="HAMAP-Rule" id="MF_00087"/>
    </source>
</evidence>
<dbReference type="EC" id="1.2.1.70" evidence="1"/>
<dbReference type="EMBL" id="CP000825">
    <property type="protein sequence ID" value="ABV50477.1"/>
    <property type="molecule type" value="Genomic_DNA"/>
</dbReference>
<dbReference type="RefSeq" id="WP_012007576.1">
    <property type="nucleotide sequence ID" value="NC_009840.1"/>
</dbReference>
<dbReference type="SMR" id="A8G4E6"/>
<dbReference type="STRING" id="93060.P9215_08621"/>
<dbReference type="KEGG" id="pmh:P9215_08621"/>
<dbReference type="eggNOG" id="COG0373">
    <property type="taxonomic scope" value="Bacteria"/>
</dbReference>
<dbReference type="HOGENOM" id="CLU_035113_2_1_3"/>
<dbReference type="OrthoDB" id="110209at2"/>
<dbReference type="UniPathway" id="UPA00251">
    <property type="reaction ID" value="UER00316"/>
</dbReference>
<dbReference type="UniPathway" id="UPA00668"/>
<dbReference type="Proteomes" id="UP000002014">
    <property type="component" value="Chromosome"/>
</dbReference>
<dbReference type="GO" id="GO:0008883">
    <property type="term" value="F:glutamyl-tRNA reductase activity"/>
    <property type="evidence" value="ECO:0007669"/>
    <property type="project" value="UniProtKB-UniRule"/>
</dbReference>
<dbReference type="GO" id="GO:0050661">
    <property type="term" value="F:NADP binding"/>
    <property type="evidence" value="ECO:0007669"/>
    <property type="project" value="InterPro"/>
</dbReference>
<dbReference type="GO" id="GO:0015995">
    <property type="term" value="P:chlorophyll biosynthetic process"/>
    <property type="evidence" value="ECO:0007669"/>
    <property type="project" value="UniProtKB-UniRule"/>
</dbReference>
<dbReference type="GO" id="GO:0006782">
    <property type="term" value="P:protoporphyrinogen IX biosynthetic process"/>
    <property type="evidence" value="ECO:0007669"/>
    <property type="project" value="UniProtKB-UniRule"/>
</dbReference>
<dbReference type="CDD" id="cd05213">
    <property type="entry name" value="NAD_bind_Glutamyl_tRNA_reduct"/>
    <property type="match status" value="1"/>
</dbReference>
<dbReference type="FunFam" id="3.30.460.30:FF:000001">
    <property type="entry name" value="Glutamyl-tRNA reductase"/>
    <property type="match status" value="1"/>
</dbReference>
<dbReference type="Gene3D" id="3.30.460.30">
    <property type="entry name" value="Glutamyl-tRNA reductase, N-terminal domain"/>
    <property type="match status" value="1"/>
</dbReference>
<dbReference type="Gene3D" id="3.40.50.720">
    <property type="entry name" value="NAD(P)-binding Rossmann-like Domain"/>
    <property type="match status" value="1"/>
</dbReference>
<dbReference type="HAMAP" id="MF_00087">
    <property type="entry name" value="Glu_tRNA_reductase"/>
    <property type="match status" value="1"/>
</dbReference>
<dbReference type="InterPro" id="IPR000343">
    <property type="entry name" value="4pyrrol_synth_GluRdtase"/>
</dbReference>
<dbReference type="InterPro" id="IPR015896">
    <property type="entry name" value="4pyrrol_synth_GluRdtase_dimer"/>
</dbReference>
<dbReference type="InterPro" id="IPR015895">
    <property type="entry name" value="4pyrrol_synth_GluRdtase_N"/>
</dbReference>
<dbReference type="InterPro" id="IPR018214">
    <property type="entry name" value="GluRdtase_CS"/>
</dbReference>
<dbReference type="InterPro" id="IPR036453">
    <property type="entry name" value="GluRdtase_dimer_dom_sf"/>
</dbReference>
<dbReference type="InterPro" id="IPR036343">
    <property type="entry name" value="GluRdtase_N_sf"/>
</dbReference>
<dbReference type="InterPro" id="IPR036291">
    <property type="entry name" value="NAD(P)-bd_dom_sf"/>
</dbReference>
<dbReference type="InterPro" id="IPR006151">
    <property type="entry name" value="Shikm_DH/Glu-tRNA_Rdtase"/>
</dbReference>
<dbReference type="NCBIfam" id="TIGR01035">
    <property type="entry name" value="hemA"/>
    <property type="match status" value="1"/>
</dbReference>
<dbReference type="NCBIfam" id="NF000744">
    <property type="entry name" value="PRK00045.1-3"/>
    <property type="match status" value="1"/>
</dbReference>
<dbReference type="PANTHER" id="PTHR43120">
    <property type="entry name" value="GLUTAMYL-TRNA REDUCTASE 1, CHLOROPLASTIC"/>
    <property type="match status" value="1"/>
</dbReference>
<dbReference type="PANTHER" id="PTHR43120:SF1">
    <property type="entry name" value="GLUTAMYL-TRNA REDUCTASE 1, CHLOROPLASTIC"/>
    <property type="match status" value="1"/>
</dbReference>
<dbReference type="Pfam" id="PF00745">
    <property type="entry name" value="GlutR_dimer"/>
    <property type="match status" value="1"/>
</dbReference>
<dbReference type="Pfam" id="PF05201">
    <property type="entry name" value="GlutR_N"/>
    <property type="match status" value="1"/>
</dbReference>
<dbReference type="Pfam" id="PF01488">
    <property type="entry name" value="Shikimate_DH"/>
    <property type="match status" value="1"/>
</dbReference>
<dbReference type="PIRSF" id="PIRSF000445">
    <property type="entry name" value="4pyrrol_synth_GluRdtase"/>
    <property type="match status" value="1"/>
</dbReference>
<dbReference type="SUPFAM" id="SSF69742">
    <property type="entry name" value="Glutamyl tRNA-reductase catalytic, N-terminal domain"/>
    <property type="match status" value="1"/>
</dbReference>
<dbReference type="SUPFAM" id="SSF69075">
    <property type="entry name" value="Glutamyl tRNA-reductase dimerization domain"/>
    <property type="match status" value="1"/>
</dbReference>
<dbReference type="SUPFAM" id="SSF51735">
    <property type="entry name" value="NAD(P)-binding Rossmann-fold domains"/>
    <property type="match status" value="1"/>
</dbReference>
<dbReference type="PROSITE" id="PS00747">
    <property type="entry name" value="GLUTR"/>
    <property type="match status" value="1"/>
</dbReference>
<reference key="1">
    <citation type="journal article" date="2007" name="PLoS Genet.">
        <title>Patterns and implications of gene gain and loss in the evolution of Prochlorococcus.</title>
        <authorList>
            <person name="Kettler G.C."/>
            <person name="Martiny A.C."/>
            <person name="Huang K."/>
            <person name="Zucker J."/>
            <person name="Coleman M.L."/>
            <person name="Rodrigue S."/>
            <person name="Chen F."/>
            <person name="Lapidus A."/>
            <person name="Ferriera S."/>
            <person name="Johnson J."/>
            <person name="Steglich C."/>
            <person name="Church G.M."/>
            <person name="Richardson P."/>
            <person name="Chisholm S.W."/>
        </authorList>
    </citation>
    <scope>NUCLEOTIDE SEQUENCE [LARGE SCALE GENOMIC DNA]</scope>
    <source>
        <strain>MIT 9215</strain>
    </source>
</reference>
<gene>
    <name evidence="1" type="primary">hemA</name>
    <name type="ordered locus">P9215_08621</name>
</gene>
<name>HEM1_PROM2</name>
<feature type="chain" id="PRO_1000057578" description="Glutamyl-tRNA reductase">
    <location>
        <begin position="1"/>
        <end position="436"/>
    </location>
</feature>
<feature type="active site" description="Nucleophile" evidence="1">
    <location>
        <position position="50"/>
    </location>
</feature>
<feature type="binding site" evidence="1">
    <location>
        <begin position="49"/>
        <end position="52"/>
    </location>
    <ligand>
        <name>substrate</name>
    </ligand>
</feature>
<feature type="binding site" evidence="1">
    <location>
        <position position="109"/>
    </location>
    <ligand>
        <name>substrate</name>
    </ligand>
</feature>
<feature type="binding site" evidence="1">
    <location>
        <begin position="114"/>
        <end position="116"/>
    </location>
    <ligand>
        <name>substrate</name>
    </ligand>
</feature>
<feature type="binding site" evidence="1">
    <location>
        <position position="120"/>
    </location>
    <ligand>
        <name>substrate</name>
    </ligand>
</feature>
<feature type="binding site" evidence="1">
    <location>
        <begin position="198"/>
        <end position="203"/>
    </location>
    <ligand>
        <name>NADP(+)</name>
        <dbReference type="ChEBI" id="CHEBI:58349"/>
    </ligand>
</feature>
<feature type="site" description="Important for activity" evidence="1">
    <location>
        <position position="99"/>
    </location>
</feature>
<keyword id="KW-0149">Chlorophyll biosynthesis</keyword>
<keyword id="KW-0521">NADP</keyword>
<keyword id="KW-0560">Oxidoreductase</keyword>
<keyword id="KW-0627">Porphyrin biosynthesis</keyword>
<organism>
    <name type="scientific">Prochlorococcus marinus (strain MIT 9215)</name>
    <dbReference type="NCBI Taxonomy" id="93060"/>
    <lineage>
        <taxon>Bacteria</taxon>
        <taxon>Bacillati</taxon>
        <taxon>Cyanobacteriota</taxon>
        <taxon>Cyanophyceae</taxon>
        <taxon>Synechococcales</taxon>
        <taxon>Prochlorococcaceae</taxon>
        <taxon>Prochlorococcus</taxon>
    </lineage>
</organism>
<comment type="function">
    <text evidence="1">Catalyzes the NADPH-dependent reduction of glutamyl-tRNA(Glu) to glutamate 1-semialdehyde (GSA).</text>
</comment>
<comment type="catalytic activity">
    <reaction evidence="1">
        <text>(S)-4-amino-5-oxopentanoate + tRNA(Glu) + NADP(+) = L-glutamyl-tRNA(Glu) + NADPH + H(+)</text>
        <dbReference type="Rhea" id="RHEA:12344"/>
        <dbReference type="Rhea" id="RHEA-COMP:9663"/>
        <dbReference type="Rhea" id="RHEA-COMP:9680"/>
        <dbReference type="ChEBI" id="CHEBI:15378"/>
        <dbReference type="ChEBI" id="CHEBI:57501"/>
        <dbReference type="ChEBI" id="CHEBI:57783"/>
        <dbReference type="ChEBI" id="CHEBI:58349"/>
        <dbReference type="ChEBI" id="CHEBI:78442"/>
        <dbReference type="ChEBI" id="CHEBI:78520"/>
        <dbReference type="EC" id="1.2.1.70"/>
    </reaction>
</comment>
<comment type="pathway">
    <text evidence="1">Porphyrin-containing compound metabolism; protoporphyrin-IX biosynthesis; 5-aminolevulinate from L-glutamyl-tRNA(Glu): step 1/2.</text>
</comment>
<comment type="pathway">
    <text evidence="1">Porphyrin-containing compound metabolism; chlorophyll biosynthesis.</text>
</comment>
<comment type="subunit">
    <text evidence="1">Homodimer.</text>
</comment>
<comment type="domain">
    <text evidence="1">Possesses an unusual extended V-shaped dimeric structure with each monomer consisting of three distinct domains arranged along a curved 'spinal' alpha-helix. The N-terminal catalytic domain specifically recognizes the glutamate moiety of the substrate. The second domain is the NADPH-binding domain, and the third C-terminal domain is responsible for dimerization.</text>
</comment>
<comment type="miscellaneous">
    <text evidence="1">During catalysis, the active site Cys acts as a nucleophile attacking the alpha-carbonyl group of tRNA-bound glutamate with the formation of a thioester intermediate between enzyme and glutamate, and the concomitant release of tRNA(Glu). The thioester intermediate is finally reduced by direct hydride transfer from NADPH, to form the product GSA.</text>
</comment>
<comment type="similarity">
    <text evidence="1">Belongs to the glutamyl-tRNA reductase family.</text>
</comment>
<proteinExistence type="inferred from homology"/>